<proteinExistence type="inferred from homology"/>
<accession>Q55G45</accession>
<feature type="chain" id="PRO_0000393873" description="Probable mitochondrial Rho GTPase gemA">
    <location>
        <begin position="1"/>
        <end position="658"/>
    </location>
</feature>
<feature type="topological domain" description="Cytoplasmic" evidence="2">
    <location>
        <begin position="1"/>
        <end position="633"/>
    </location>
</feature>
<feature type="transmembrane region" description="Helical; Anchor for type IV membrane protein" evidence="2">
    <location>
        <begin position="634"/>
        <end position="656"/>
    </location>
</feature>
<feature type="topological domain" description="Mitochondrial intermembrane" evidence="2">
    <location>
        <begin position="657"/>
        <end position="658"/>
    </location>
</feature>
<feature type="domain" description="Miro 1" evidence="4">
    <location>
        <begin position="2"/>
        <end position="175"/>
    </location>
</feature>
<feature type="domain" description="EF-hand 1" evidence="3">
    <location>
        <begin position="191"/>
        <end position="226"/>
    </location>
</feature>
<feature type="domain" description="EF-hand 2" evidence="3">
    <location>
        <begin position="311"/>
        <end position="346"/>
    </location>
</feature>
<feature type="domain" description="Miro 2" evidence="4">
    <location>
        <begin position="420"/>
        <end position="616"/>
    </location>
</feature>
<feature type="region of interest" description="Disordered" evidence="5">
    <location>
        <begin position="532"/>
        <end position="575"/>
    </location>
</feature>
<feature type="binding site" evidence="2">
    <location>
        <begin position="11"/>
        <end position="18"/>
    </location>
    <ligand>
        <name>GTP</name>
        <dbReference type="ChEBI" id="CHEBI:37565"/>
        <label>1</label>
    </ligand>
</feature>
<feature type="binding site" evidence="2">
    <location>
        <begin position="57"/>
        <end position="62"/>
    </location>
    <ligand>
        <name>GTP</name>
        <dbReference type="ChEBI" id="CHEBI:37565"/>
        <label>1</label>
    </ligand>
</feature>
<feature type="binding site" evidence="2">
    <location>
        <begin position="118"/>
        <end position="121"/>
    </location>
    <ligand>
        <name>GTP</name>
        <dbReference type="ChEBI" id="CHEBI:37565"/>
        <label>1</label>
    </ligand>
</feature>
<feature type="binding site" evidence="3">
    <location>
        <position position="204"/>
    </location>
    <ligand>
        <name>Ca(2+)</name>
        <dbReference type="ChEBI" id="CHEBI:29108"/>
        <label>1</label>
    </ligand>
</feature>
<feature type="binding site" evidence="3">
    <location>
        <position position="206"/>
    </location>
    <ligand>
        <name>Ca(2+)</name>
        <dbReference type="ChEBI" id="CHEBI:29108"/>
        <label>1</label>
    </ligand>
</feature>
<feature type="binding site" evidence="3">
    <location>
        <position position="208"/>
    </location>
    <ligand>
        <name>Ca(2+)</name>
        <dbReference type="ChEBI" id="CHEBI:29108"/>
        <label>1</label>
    </ligand>
</feature>
<feature type="binding site" evidence="3">
    <location>
        <position position="210"/>
    </location>
    <ligand>
        <name>Ca(2+)</name>
        <dbReference type="ChEBI" id="CHEBI:29108"/>
        <label>1</label>
    </ligand>
</feature>
<feature type="binding site" evidence="3">
    <location>
        <position position="215"/>
    </location>
    <ligand>
        <name>Ca(2+)</name>
        <dbReference type="ChEBI" id="CHEBI:29108"/>
        <label>1</label>
    </ligand>
</feature>
<feature type="binding site" evidence="3">
    <location>
        <position position="324"/>
    </location>
    <ligand>
        <name>Ca(2+)</name>
        <dbReference type="ChEBI" id="CHEBI:29108"/>
        <label>2</label>
    </ligand>
</feature>
<feature type="binding site" evidence="3">
    <location>
        <position position="326"/>
    </location>
    <ligand>
        <name>Ca(2+)</name>
        <dbReference type="ChEBI" id="CHEBI:29108"/>
        <label>2</label>
    </ligand>
</feature>
<feature type="binding site" evidence="3">
    <location>
        <position position="328"/>
    </location>
    <ligand>
        <name>Ca(2+)</name>
        <dbReference type="ChEBI" id="CHEBI:29108"/>
        <label>2</label>
    </ligand>
</feature>
<feature type="binding site" evidence="3">
    <location>
        <position position="335"/>
    </location>
    <ligand>
        <name>Ca(2+)</name>
        <dbReference type="ChEBI" id="CHEBI:29108"/>
        <label>2</label>
    </ligand>
</feature>
<feature type="binding site" evidence="2">
    <location>
        <begin position="429"/>
        <end position="436"/>
    </location>
    <ligand>
        <name>GTP</name>
        <dbReference type="ChEBI" id="CHEBI:37565"/>
        <label>2</label>
    </ligand>
</feature>
<feature type="binding site" evidence="2">
    <location>
        <begin position="466"/>
        <end position="468"/>
    </location>
    <ligand>
        <name>GTP</name>
        <dbReference type="ChEBI" id="CHEBI:37565"/>
        <label>2</label>
    </ligand>
</feature>
<feature type="binding site" evidence="2">
    <location>
        <begin position="530"/>
        <end position="533"/>
    </location>
    <ligand>
        <name>GTP</name>
        <dbReference type="ChEBI" id="CHEBI:37565"/>
        <label>2</label>
    </ligand>
</feature>
<keyword id="KW-0106">Calcium</keyword>
<keyword id="KW-0342">GTP-binding</keyword>
<keyword id="KW-0378">Hydrolase</keyword>
<keyword id="KW-0472">Membrane</keyword>
<keyword id="KW-0479">Metal-binding</keyword>
<keyword id="KW-0496">Mitochondrion</keyword>
<keyword id="KW-1000">Mitochondrion outer membrane</keyword>
<keyword id="KW-0547">Nucleotide-binding</keyword>
<keyword id="KW-1185">Reference proteome</keyword>
<keyword id="KW-0677">Repeat</keyword>
<keyword id="KW-0812">Transmembrane</keyword>
<keyword id="KW-1133">Transmembrane helix</keyword>
<sequence length="658" mass="75140">MKNNIKVILIGDEQVGKSTIINSFISESFSEITQKTLPEVTIPAEFNNEICSTRIIDTFDDGKNLKNQMNMEIRTADAIVIVYSVDRFDTFMSIRMKWIPLINQLRGSNKSPIIIVGNKLDLVDDKHENNKVQIEETIQYFRSTYSNTIQWLECSAKTMENLPELLYASQTSVFFPERILYNREENKMTEGCERALKRIFKLCDHDNDGSLSEEEINYFQTKCGHETMTSEEIQNIQQFVLSKIPDGVNSNGFTEKGFLYMNLLFLLRGPCQHTWTSLRSFNYDDDLVLLESYVHPTLQVPPNHNTILSSMGNEFFKSLFEKYDSDSDGVLSSFDLVSLFSTTPKIPWEIGFEKHFNTDKDSNLTLSGFLSLWNLQTYENYKVTLEYLAYFGSQTENNNIDMISILNSRELDIKSNQFTRNIVNCYVFGAEAVGKTTFLNTFIGKSFSTLYNATNGNDNFKVCGHLLKNKYLILSEYVGEKIPTAELKSKCDLVCLLYDCNSEQSFKFIENIYNQLKQQQLNIPIVFIRTKNNNNNNNNNNNNNNNNNNNNLNNNNNNINNNNNNNNNNTTTTNANVSTSKIIDSFFKSHKNYSPKDFSISRSNSIYHEMMETIVNSSFNDNSNGSNGSNNSNILTYLVIAAGVAGVGLLLSKYLAKK</sequence>
<organism>
    <name type="scientific">Dictyostelium discoideum</name>
    <name type="common">Social amoeba</name>
    <dbReference type="NCBI Taxonomy" id="44689"/>
    <lineage>
        <taxon>Eukaryota</taxon>
        <taxon>Amoebozoa</taxon>
        <taxon>Evosea</taxon>
        <taxon>Eumycetozoa</taxon>
        <taxon>Dictyostelia</taxon>
        <taxon>Dictyosteliales</taxon>
        <taxon>Dictyosteliaceae</taxon>
        <taxon>Dictyostelium</taxon>
    </lineage>
</organism>
<protein>
    <recommendedName>
        <fullName>Probable mitochondrial Rho GTPase gemA</fullName>
        <shortName>Miro</shortName>
        <ecNumber>3.6.5.-</ecNumber>
    </recommendedName>
</protein>
<evidence type="ECO:0000250" key="1"/>
<evidence type="ECO:0000255" key="2"/>
<evidence type="ECO:0000255" key="3">
    <source>
        <dbReference type="PROSITE-ProRule" id="PRU00448"/>
    </source>
</evidence>
<evidence type="ECO:0000255" key="4">
    <source>
        <dbReference type="PROSITE-ProRule" id="PRU00757"/>
    </source>
</evidence>
<evidence type="ECO:0000256" key="5">
    <source>
        <dbReference type="SAM" id="MobiDB-lite"/>
    </source>
</evidence>
<evidence type="ECO:0000305" key="6"/>
<name>GEMA_DICDI</name>
<gene>
    <name type="primary">gemA</name>
    <name type="ORF">DDB_G0267830</name>
</gene>
<comment type="function">
    <text evidence="1">Mitochondrial GTPase involved in mitochondrial trafficking. Probably involved in control of anterograde transport of mitochondria and their subcellular distribution (By similarity).</text>
</comment>
<comment type="subcellular location">
    <subcellularLocation>
        <location evidence="1">Mitochondrion outer membrane</location>
        <topology evidence="1">Single-pass type IV membrane protein</topology>
    </subcellularLocation>
</comment>
<comment type="similarity">
    <text evidence="4 6">Belongs to the mitochondrial Rho GTPase family.</text>
</comment>
<dbReference type="EC" id="3.6.5.-"/>
<dbReference type="EMBL" id="AAFI02000003">
    <property type="protein sequence ID" value="EAL73368.1"/>
    <property type="molecule type" value="Genomic_DNA"/>
</dbReference>
<dbReference type="RefSeq" id="XP_647338.1">
    <property type="nucleotide sequence ID" value="XM_642246.1"/>
</dbReference>
<dbReference type="SMR" id="Q55G45"/>
<dbReference type="FunCoup" id="Q55G45">
    <property type="interactions" value="873"/>
</dbReference>
<dbReference type="STRING" id="44689.Q55G45"/>
<dbReference type="PaxDb" id="44689-DDB0230033"/>
<dbReference type="EnsemblProtists" id="EAL73368">
    <property type="protein sequence ID" value="EAL73368"/>
    <property type="gene ID" value="DDB_G0267830"/>
</dbReference>
<dbReference type="GeneID" id="8616148"/>
<dbReference type="KEGG" id="ddi:DDB_G0267830"/>
<dbReference type="dictyBase" id="DDB_G0267830">
    <property type="gene designation" value="gemA"/>
</dbReference>
<dbReference type="VEuPathDB" id="AmoebaDB:DDB_G0267830"/>
<dbReference type="eggNOG" id="KOG1707">
    <property type="taxonomic scope" value="Eukaryota"/>
</dbReference>
<dbReference type="HOGENOM" id="CLU_014255_3_0_1"/>
<dbReference type="InParanoid" id="Q55G45"/>
<dbReference type="OMA" id="HETTWGI"/>
<dbReference type="PhylomeDB" id="Q55G45"/>
<dbReference type="Reactome" id="R-DDI-9013419">
    <property type="pathway name" value="RHOT2 GTPase cycle"/>
</dbReference>
<dbReference type="Reactome" id="R-DDI-9013425">
    <property type="pathway name" value="RHOT1 GTPase cycle"/>
</dbReference>
<dbReference type="PRO" id="PR:Q55G45"/>
<dbReference type="Proteomes" id="UP000002195">
    <property type="component" value="Chromosome 1"/>
</dbReference>
<dbReference type="GO" id="GO:0042995">
    <property type="term" value="C:cell projection"/>
    <property type="evidence" value="ECO:0000318"/>
    <property type="project" value="GO_Central"/>
</dbReference>
<dbReference type="GO" id="GO:0031410">
    <property type="term" value="C:cytoplasmic vesicle"/>
    <property type="evidence" value="ECO:0000318"/>
    <property type="project" value="GO_Central"/>
</dbReference>
<dbReference type="GO" id="GO:0005856">
    <property type="term" value="C:cytoskeleton"/>
    <property type="evidence" value="ECO:0000318"/>
    <property type="project" value="GO_Central"/>
</dbReference>
<dbReference type="GO" id="GO:0032865">
    <property type="term" value="C:ERMES complex"/>
    <property type="evidence" value="ECO:0000304"/>
    <property type="project" value="dictyBase"/>
</dbReference>
<dbReference type="GO" id="GO:0005741">
    <property type="term" value="C:mitochondrial outer membrane"/>
    <property type="evidence" value="ECO:0000314"/>
    <property type="project" value="dictyBase"/>
</dbReference>
<dbReference type="GO" id="GO:0005739">
    <property type="term" value="C:mitochondrion"/>
    <property type="evidence" value="ECO:0000250"/>
    <property type="project" value="dictyBase"/>
</dbReference>
<dbReference type="GO" id="GO:0005886">
    <property type="term" value="C:plasma membrane"/>
    <property type="evidence" value="ECO:0000318"/>
    <property type="project" value="GO_Central"/>
</dbReference>
<dbReference type="GO" id="GO:0005509">
    <property type="term" value="F:calcium ion binding"/>
    <property type="evidence" value="ECO:0007669"/>
    <property type="project" value="InterPro"/>
</dbReference>
<dbReference type="GO" id="GO:0005525">
    <property type="term" value="F:GTP binding"/>
    <property type="evidence" value="ECO:0000318"/>
    <property type="project" value="GO_Central"/>
</dbReference>
<dbReference type="GO" id="GO:0003924">
    <property type="term" value="F:GTPase activity"/>
    <property type="evidence" value="ECO:0000318"/>
    <property type="project" value="GO_Central"/>
</dbReference>
<dbReference type="GO" id="GO:0019901">
    <property type="term" value="F:protein kinase binding"/>
    <property type="evidence" value="ECO:0000318"/>
    <property type="project" value="GO_Central"/>
</dbReference>
<dbReference type="GO" id="GO:0007015">
    <property type="term" value="P:actin filament organization"/>
    <property type="evidence" value="ECO:0000318"/>
    <property type="project" value="GO_Central"/>
</dbReference>
<dbReference type="GO" id="GO:0019954">
    <property type="term" value="P:asexual reproduction"/>
    <property type="evidence" value="ECO:0000315"/>
    <property type="project" value="dictyBase"/>
</dbReference>
<dbReference type="GO" id="GO:0030865">
    <property type="term" value="P:cortical cytoskeleton organization"/>
    <property type="evidence" value="ECO:0000318"/>
    <property type="project" value="GO_Central"/>
</dbReference>
<dbReference type="GO" id="GO:0007163">
    <property type="term" value="P:establishment or maintenance of cell polarity"/>
    <property type="evidence" value="ECO:0000318"/>
    <property type="project" value="GO_Central"/>
</dbReference>
<dbReference type="GO" id="GO:0007005">
    <property type="term" value="P:mitochondrion organization"/>
    <property type="evidence" value="ECO:0000315"/>
    <property type="project" value="dictyBase"/>
</dbReference>
<dbReference type="GO" id="GO:1990456">
    <property type="term" value="P:mitochondrion-endoplasmic reticulum membrane tethering"/>
    <property type="evidence" value="ECO:0000304"/>
    <property type="project" value="dictyBase"/>
</dbReference>
<dbReference type="GO" id="GO:0032956">
    <property type="term" value="P:regulation of actin cytoskeleton organization"/>
    <property type="evidence" value="ECO:0000318"/>
    <property type="project" value="GO_Central"/>
</dbReference>
<dbReference type="GO" id="GO:0008360">
    <property type="term" value="P:regulation of cell shape"/>
    <property type="evidence" value="ECO:0000318"/>
    <property type="project" value="GO_Central"/>
</dbReference>
<dbReference type="GO" id="GO:0007165">
    <property type="term" value="P:signal transduction"/>
    <property type="evidence" value="ECO:0000318"/>
    <property type="project" value="GO_Central"/>
</dbReference>
<dbReference type="GO" id="GO:0007264">
    <property type="term" value="P:small GTPase-mediated signal transduction"/>
    <property type="evidence" value="ECO:0007669"/>
    <property type="project" value="InterPro"/>
</dbReference>
<dbReference type="FunFam" id="1.10.238.10:FF:000011">
    <property type="entry name" value="Mitochondrial Rho GTPase"/>
    <property type="match status" value="1"/>
</dbReference>
<dbReference type="FunFam" id="3.40.50.300:FF:004833">
    <property type="entry name" value="Probable mitochondrial Rho GTPase gemA"/>
    <property type="match status" value="1"/>
</dbReference>
<dbReference type="Gene3D" id="1.10.238.10">
    <property type="entry name" value="EF-hand"/>
    <property type="match status" value="2"/>
</dbReference>
<dbReference type="Gene3D" id="3.40.50.300">
    <property type="entry name" value="P-loop containing nucleotide triphosphate hydrolases"/>
    <property type="match status" value="2"/>
</dbReference>
<dbReference type="InterPro" id="IPR011992">
    <property type="entry name" value="EF-hand-dom_pair"/>
</dbReference>
<dbReference type="InterPro" id="IPR018247">
    <property type="entry name" value="EF_Hand_1_Ca_BS"/>
</dbReference>
<dbReference type="InterPro" id="IPR013566">
    <property type="entry name" value="EF_hand_assoc_1"/>
</dbReference>
<dbReference type="InterPro" id="IPR013567">
    <property type="entry name" value="EF_hand_assoc_2"/>
</dbReference>
<dbReference type="InterPro" id="IPR002048">
    <property type="entry name" value="EF_hand_dom"/>
</dbReference>
<dbReference type="InterPro" id="IPR021181">
    <property type="entry name" value="Miro"/>
</dbReference>
<dbReference type="InterPro" id="IPR020860">
    <property type="entry name" value="MIRO_dom"/>
</dbReference>
<dbReference type="InterPro" id="IPR027417">
    <property type="entry name" value="P-loop_NTPase"/>
</dbReference>
<dbReference type="InterPro" id="IPR005225">
    <property type="entry name" value="Small_GTP-bd"/>
</dbReference>
<dbReference type="InterPro" id="IPR001806">
    <property type="entry name" value="Small_GTPase"/>
</dbReference>
<dbReference type="InterPro" id="IPR003578">
    <property type="entry name" value="Small_GTPase_Rho"/>
</dbReference>
<dbReference type="NCBIfam" id="TIGR00231">
    <property type="entry name" value="small_GTP"/>
    <property type="match status" value="1"/>
</dbReference>
<dbReference type="PANTHER" id="PTHR24072">
    <property type="entry name" value="RHO FAMILY GTPASE"/>
    <property type="match status" value="1"/>
</dbReference>
<dbReference type="Pfam" id="PF08355">
    <property type="entry name" value="EF_assoc_1"/>
    <property type="match status" value="1"/>
</dbReference>
<dbReference type="Pfam" id="PF08356">
    <property type="entry name" value="EF_assoc_2"/>
    <property type="match status" value="1"/>
</dbReference>
<dbReference type="Pfam" id="PF00071">
    <property type="entry name" value="Ras"/>
    <property type="match status" value="2"/>
</dbReference>
<dbReference type="PIRSF" id="PIRSF037488">
    <property type="entry name" value="Mt_Rho_GTPase"/>
    <property type="match status" value="1"/>
</dbReference>
<dbReference type="PRINTS" id="PR00449">
    <property type="entry name" value="RASTRNSFRMNG"/>
</dbReference>
<dbReference type="SMART" id="SM00054">
    <property type="entry name" value="EFh"/>
    <property type="match status" value="2"/>
</dbReference>
<dbReference type="SMART" id="SM00175">
    <property type="entry name" value="RAB"/>
    <property type="match status" value="1"/>
</dbReference>
<dbReference type="SMART" id="SM00173">
    <property type="entry name" value="RAS"/>
    <property type="match status" value="1"/>
</dbReference>
<dbReference type="SMART" id="SM00174">
    <property type="entry name" value="RHO"/>
    <property type="match status" value="1"/>
</dbReference>
<dbReference type="SUPFAM" id="SSF47473">
    <property type="entry name" value="EF-hand"/>
    <property type="match status" value="1"/>
</dbReference>
<dbReference type="SUPFAM" id="SSF52540">
    <property type="entry name" value="P-loop containing nucleoside triphosphate hydrolases"/>
    <property type="match status" value="2"/>
</dbReference>
<dbReference type="PROSITE" id="PS00018">
    <property type="entry name" value="EF_HAND_1"/>
    <property type="match status" value="2"/>
</dbReference>
<dbReference type="PROSITE" id="PS50222">
    <property type="entry name" value="EF_HAND_2"/>
    <property type="match status" value="2"/>
</dbReference>
<dbReference type="PROSITE" id="PS51423">
    <property type="entry name" value="MIRO"/>
    <property type="match status" value="2"/>
</dbReference>
<reference key="1">
    <citation type="journal article" date="2005" name="Nature">
        <title>The genome of the social amoeba Dictyostelium discoideum.</title>
        <authorList>
            <person name="Eichinger L."/>
            <person name="Pachebat J.A."/>
            <person name="Gloeckner G."/>
            <person name="Rajandream M.A."/>
            <person name="Sucgang R."/>
            <person name="Berriman M."/>
            <person name="Song J."/>
            <person name="Olsen R."/>
            <person name="Szafranski K."/>
            <person name="Xu Q."/>
            <person name="Tunggal B."/>
            <person name="Kummerfeld S."/>
            <person name="Madera M."/>
            <person name="Konfortov B.A."/>
            <person name="Rivero F."/>
            <person name="Bankier A.T."/>
            <person name="Lehmann R."/>
            <person name="Hamlin N."/>
            <person name="Davies R."/>
            <person name="Gaudet P."/>
            <person name="Fey P."/>
            <person name="Pilcher K."/>
            <person name="Chen G."/>
            <person name="Saunders D."/>
            <person name="Sodergren E.J."/>
            <person name="Davis P."/>
            <person name="Kerhornou A."/>
            <person name="Nie X."/>
            <person name="Hall N."/>
            <person name="Anjard C."/>
            <person name="Hemphill L."/>
            <person name="Bason N."/>
            <person name="Farbrother P."/>
            <person name="Desany B."/>
            <person name="Just E."/>
            <person name="Morio T."/>
            <person name="Rost R."/>
            <person name="Churcher C.M."/>
            <person name="Cooper J."/>
            <person name="Haydock S."/>
            <person name="van Driessche N."/>
            <person name="Cronin A."/>
            <person name="Goodhead I."/>
            <person name="Muzny D.M."/>
            <person name="Mourier T."/>
            <person name="Pain A."/>
            <person name="Lu M."/>
            <person name="Harper D."/>
            <person name="Lindsay R."/>
            <person name="Hauser H."/>
            <person name="James K.D."/>
            <person name="Quiles M."/>
            <person name="Madan Babu M."/>
            <person name="Saito T."/>
            <person name="Buchrieser C."/>
            <person name="Wardroper A."/>
            <person name="Felder M."/>
            <person name="Thangavelu M."/>
            <person name="Johnson D."/>
            <person name="Knights A."/>
            <person name="Loulseged H."/>
            <person name="Mungall K.L."/>
            <person name="Oliver K."/>
            <person name="Price C."/>
            <person name="Quail M.A."/>
            <person name="Urushihara H."/>
            <person name="Hernandez J."/>
            <person name="Rabbinowitsch E."/>
            <person name="Steffen D."/>
            <person name="Sanders M."/>
            <person name="Ma J."/>
            <person name="Kohara Y."/>
            <person name="Sharp S."/>
            <person name="Simmonds M.N."/>
            <person name="Spiegler S."/>
            <person name="Tivey A."/>
            <person name="Sugano S."/>
            <person name="White B."/>
            <person name="Walker D."/>
            <person name="Woodward J.R."/>
            <person name="Winckler T."/>
            <person name="Tanaka Y."/>
            <person name="Shaulsky G."/>
            <person name="Schleicher M."/>
            <person name="Weinstock G.M."/>
            <person name="Rosenthal A."/>
            <person name="Cox E.C."/>
            <person name="Chisholm R.L."/>
            <person name="Gibbs R.A."/>
            <person name="Loomis W.F."/>
            <person name="Platzer M."/>
            <person name="Kay R.R."/>
            <person name="Williams J.G."/>
            <person name="Dear P.H."/>
            <person name="Noegel A.A."/>
            <person name="Barrell B.G."/>
            <person name="Kuspa A."/>
        </authorList>
    </citation>
    <scope>NUCLEOTIDE SEQUENCE [LARGE SCALE GENOMIC DNA]</scope>
    <source>
        <strain>AX4</strain>
    </source>
</reference>
<reference key="2">
    <citation type="journal article" date="2006" name="Eur. J. Cell Biol.">
        <title>Rho GTPase signaling in Dictyostelium discoideum: insights from the genome.</title>
        <authorList>
            <person name="Vlahou G."/>
            <person name="Rivero F."/>
        </authorList>
    </citation>
    <scope>IDENTIFICATION</scope>
</reference>